<gene>
    <name type="primary">WSSI-2</name>
</gene>
<protein>
    <recommendedName>
        <fullName>Starch synthase 1, chloroplastic/amyloplastic</fullName>
        <ecNumber>2.4.1.21</ecNumber>
    </recommendedName>
    <alternativeName>
        <fullName>Starch synthase I-2</fullName>
        <shortName>SS I</shortName>
        <shortName>SS I-2</shortName>
    </alternativeName>
</protein>
<sequence length="647" mass="71005">MAATGVGAGCLAPSVRLRADPATAARASACVVRARLRRVARGRYVAELSREGPAARPAQQQQLAPPLVPGFLAPPPPAPAQSPAPTQPPLPDAGVGELAPDLLLEGIAEDSIDSIIVAASEQDSEIMDAKDQPQAKVTRSIVFVTGEAAPYAKSGGLGDVCGSLPIALAARGHRVMVVMPRYLNGSSDKNYAKALYTAKHIKIPCFGGSHEVTFFHEYRDNVDWVFVDHPSYHRPGSLYGDNFGAFGDNQFRYTLLCYAACEAPLILELGGYIYGQNCMFVVNDWHASLVPVLLAAKYRPYGVYRDSRSTLVIHNLAHQGVEPASTYPDLGLPPEWYGALEWVFPEWARRHALDKGEAVNFLKGAVVTADRIVTVSQGYSWEVTTAEGGQGLNELLSSRKSVLNGIVNGIDINDWNPTTDKCLPHHYSVDDLSGKAKCKAELQKELGLPVREDVPLIGFIGRLDYQKGIDLIKMAIPELMREDVQFVMLGSGDPIFEGWMRSTESSYKDKFRGWVGFSVPVSHRITAGCDILLMPSRFEPCGLNQLYAMQYGTVPVVHGTGGLRDTVETFNPFGAKGEEGTGWAFSPLTVDKMLWALRTAMSTFREHKPSWEGLMKRGMTKDHTWDHAAEQYEQIFEWAFVDQPYVM</sequence>
<organism>
    <name type="scientific">Triticum aestivum</name>
    <name type="common">Wheat</name>
    <dbReference type="NCBI Taxonomy" id="4565"/>
    <lineage>
        <taxon>Eukaryota</taxon>
        <taxon>Viridiplantae</taxon>
        <taxon>Streptophyta</taxon>
        <taxon>Embryophyta</taxon>
        <taxon>Tracheophyta</taxon>
        <taxon>Spermatophyta</taxon>
        <taxon>Magnoliopsida</taxon>
        <taxon>Liliopsida</taxon>
        <taxon>Poales</taxon>
        <taxon>Poaceae</taxon>
        <taxon>BOP clade</taxon>
        <taxon>Pooideae</taxon>
        <taxon>Triticodae</taxon>
        <taxon>Triticeae</taxon>
        <taxon>Triticinae</taxon>
        <taxon>Triticum</taxon>
    </lineage>
</organism>
<name>SSY1_WHEAT</name>
<dbReference type="EC" id="2.4.1.21"/>
<dbReference type="EMBL" id="AJ292522">
    <property type="protein sequence ID" value="CAB99210.1"/>
    <property type="molecule type" value="mRNA"/>
</dbReference>
<dbReference type="EMBL" id="U48227">
    <property type="protein sequence ID" value="AAB02197.1"/>
    <property type="status" value="ALT_FRAME"/>
    <property type="molecule type" value="mRNA"/>
</dbReference>
<dbReference type="PIR" id="T06280">
    <property type="entry name" value="T06280"/>
</dbReference>
<dbReference type="SMR" id="Q43654"/>
<dbReference type="STRING" id="4565.Q43654"/>
<dbReference type="CAZy" id="GT5">
    <property type="family name" value="Glycosyltransferase Family 5"/>
</dbReference>
<dbReference type="PaxDb" id="4565-Traes_7BS_6135B1D85.1"/>
<dbReference type="EnsemblPlants" id="TraesARI5B03G02969670.1">
    <property type="protein sequence ID" value="TraesARI5B03G02969670.1"/>
    <property type="gene ID" value="TraesARI5B03G02969670"/>
</dbReference>
<dbReference type="EnsemblPlants" id="TraesJAG7B03G04030320.1">
    <property type="protein sequence ID" value="TraesJAG7B03G04030320.1"/>
    <property type="gene ID" value="TraesJAG7B03G04030320"/>
</dbReference>
<dbReference type="EnsemblPlants" id="TraesJUL7B03G04085220.1">
    <property type="protein sequence ID" value="TraesJUL7B03G04085220.1"/>
    <property type="gene ID" value="TraesJUL7B03G04085220"/>
</dbReference>
<dbReference type="EnsemblPlants" id="TraesKAR7B01G0013110.1">
    <property type="protein sequence ID" value="cds.TraesKAR7B01G0013110.1"/>
    <property type="gene ID" value="TraesKAR7B01G0013110"/>
</dbReference>
<dbReference type="EnsemblPlants" id="TraesLAC7B03G03999950.1">
    <property type="protein sequence ID" value="TraesLAC7B03G03999950.1"/>
    <property type="gene ID" value="TraesLAC7B03G03999950"/>
</dbReference>
<dbReference type="EnsemblPlants" id="TraesLDM7B03G04050720.1">
    <property type="protein sequence ID" value="TraesLDM7B03G04050720.1"/>
    <property type="gene ID" value="TraesLDM7B03G04050720"/>
</dbReference>
<dbReference type="EnsemblPlants" id="TraesMAC7B03G04043120.1">
    <property type="protein sequence ID" value="TraesMAC7B03G04043120.1"/>
    <property type="gene ID" value="TraesMAC7B03G04043120"/>
</dbReference>
<dbReference type="EnsemblPlants" id="TraesNOR7B03G04092110.1">
    <property type="protein sequence ID" value="TraesNOR7B03G04092110.1"/>
    <property type="gene ID" value="TraesNOR7B03G04092110"/>
</dbReference>
<dbReference type="EnsemblPlants" id="TraesPARA_EIv1.0_2370360.1">
    <property type="protein sequence ID" value="TraesPARA_EIv1.0_2370360.1.CDS"/>
    <property type="gene ID" value="TraesPARA_EIv1.0_2370360"/>
</dbReference>
<dbReference type="EnsemblPlants" id="TraesSTA7B03G04042950.1">
    <property type="protein sequence ID" value="TraesSTA7B03G04042950.1"/>
    <property type="gene ID" value="TraesSTA7B03G04042950"/>
</dbReference>
<dbReference type="EnsemblPlants" id="TraesSYM5B03G02955160.1">
    <property type="protein sequence ID" value="TraesSYM5B03G02955160.1"/>
    <property type="gene ID" value="TraesSYM5B03G02955160"/>
</dbReference>
<dbReference type="Gramene" id="TraesARI5B03G02969670.1">
    <property type="protein sequence ID" value="TraesARI5B03G02969670.1"/>
    <property type="gene ID" value="TraesARI5B03G02969670"/>
</dbReference>
<dbReference type="Gramene" id="TraesJAG7B03G04030320.1">
    <property type="protein sequence ID" value="TraesJAG7B03G04030320.1"/>
    <property type="gene ID" value="TraesJAG7B03G04030320"/>
</dbReference>
<dbReference type="Gramene" id="TraesJUL7B03G04085220.1">
    <property type="protein sequence ID" value="TraesJUL7B03G04085220.1"/>
    <property type="gene ID" value="TraesJUL7B03G04085220"/>
</dbReference>
<dbReference type="Gramene" id="TraesKAR7B01G0013110.1">
    <property type="protein sequence ID" value="cds.TraesKAR7B01G0013110.1"/>
    <property type="gene ID" value="TraesKAR7B01G0013110"/>
</dbReference>
<dbReference type="Gramene" id="TraesLAC7B03G03999950.1">
    <property type="protein sequence ID" value="TraesLAC7B03G03999950.1"/>
    <property type="gene ID" value="TraesLAC7B03G03999950"/>
</dbReference>
<dbReference type="Gramene" id="TraesLDM7B03G04050720.1">
    <property type="protein sequence ID" value="TraesLDM7B03G04050720.1"/>
    <property type="gene ID" value="TraesLDM7B03G04050720"/>
</dbReference>
<dbReference type="Gramene" id="TraesMAC7B03G04043120.1">
    <property type="protein sequence ID" value="TraesMAC7B03G04043120.1"/>
    <property type="gene ID" value="TraesMAC7B03G04043120"/>
</dbReference>
<dbReference type="Gramene" id="TraesNOR7B03G04092110.1">
    <property type="protein sequence ID" value="TraesNOR7B03G04092110.1"/>
    <property type="gene ID" value="TraesNOR7B03G04092110"/>
</dbReference>
<dbReference type="Gramene" id="TraesPARA_EIv1.0_2370360.1">
    <property type="protein sequence ID" value="TraesPARA_EIv1.0_2370360.1.CDS"/>
    <property type="gene ID" value="TraesPARA_EIv1.0_2370360"/>
</dbReference>
<dbReference type="Gramene" id="TraesSTA7B03G04042950.1">
    <property type="protein sequence ID" value="TraesSTA7B03G04042950.1"/>
    <property type="gene ID" value="TraesSTA7B03G04042950"/>
</dbReference>
<dbReference type="Gramene" id="TraesSYM5B03G02955160.1">
    <property type="protein sequence ID" value="TraesSYM5B03G02955160.1"/>
    <property type="gene ID" value="TraesSYM5B03G02955160"/>
</dbReference>
<dbReference type="eggNOG" id="ENOG502QTWM">
    <property type="taxonomic scope" value="Eukaryota"/>
</dbReference>
<dbReference type="UniPathway" id="UPA00152"/>
<dbReference type="Proteomes" id="UP000019116">
    <property type="component" value="Unplaced"/>
</dbReference>
<dbReference type="ExpressionAtlas" id="Q43654">
    <property type="expression patterns" value="baseline and differential"/>
</dbReference>
<dbReference type="GO" id="GO:0009501">
    <property type="term" value="C:amyloplast"/>
    <property type="evidence" value="ECO:0007669"/>
    <property type="project" value="UniProtKB-SubCell"/>
</dbReference>
<dbReference type="GO" id="GO:0009507">
    <property type="term" value="C:chloroplast"/>
    <property type="evidence" value="ECO:0000318"/>
    <property type="project" value="GO_Central"/>
</dbReference>
<dbReference type="GO" id="GO:0009011">
    <property type="term" value="F:alpha-1,4-glucan glucosyltransferase (ADP-glucose donor) activity"/>
    <property type="evidence" value="ECO:0007669"/>
    <property type="project" value="UniProtKB-EC"/>
</dbReference>
<dbReference type="GO" id="GO:0004373">
    <property type="term" value="F:alpha-1,4-glucan glucosyltransferase (UDP-glucose donor) activity"/>
    <property type="evidence" value="ECO:0007669"/>
    <property type="project" value="InterPro"/>
</dbReference>
<dbReference type="GO" id="GO:0019252">
    <property type="term" value="P:starch biosynthetic process"/>
    <property type="evidence" value="ECO:0007669"/>
    <property type="project" value="UniProtKB-UniPathway"/>
</dbReference>
<dbReference type="CDD" id="cd03791">
    <property type="entry name" value="GT5_Glycogen_synthase_DULL1-like"/>
    <property type="match status" value="1"/>
</dbReference>
<dbReference type="FunFam" id="3.40.50.2000:FF:000048">
    <property type="entry name" value="Starch synthase, chloroplastic/amyloplastic"/>
    <property type="match status" value="1"/>
</dbReference>
<dbReference type="Gene3D" id="3.40.50.2000">
    <property type="entry name" value="Glycogen Phosphorylase B"/>
    <property type="match status" value="2"/>
</dbReference>
<dbReference type="HAMAP" id="MF_00484">
    <property type="entry name" value="Glycogen_synth"/>
    <property type="match status" value="1"/>
</dbReference>
<dbReference type="InterPro" id="IPR001296">
    <property type="entry name" value="Glyco_trans_1"/>
</dbReference>
<dbReference type="InterPro" id="IPR011835">
    <property type="entry name" value="GS/SS"/>
</dbReference>
<dbReference type="InterPro" id="IPR013534">
    <property type="entry name" value="Starch_synth_cat_dom"/>
</dbReference>
<dbReference type="NCBIfam" id="TIGR02095">
    <property type="entry name" value="glgA"/>
    <property type="match status" value="1"/>
</dbReference>
<dbReference type="PANTHER" id="PTHR45825:SF11">
    <property type="entry name" value="ALPHA AMYLASE DOMAIN-CONTAINING PROTEIN"/>
    <property type="match status" value="1"/>
</dbReference>
<dbReference type="PANTHER" id="PTHR45825">
    <property type="entry name" value="GRANULE-BOUND STARCH SYNTHASE 1, CHLOROPLASTIC/AMYLOPLASTIC"/>
    <property type="match status" value="1"/>
</dbReference>
<dbReference type="Pfam" id="PF08323">
    <property type="entry name" value="Glyco_transf_5"/>
    <property type="match status" value="1"/>
</dbReference>
<dbReference type="Pfam" id="PF00534">
    <property type="entry name" value="Glycos_transf_1"/>
    <property type="match status" value="1"/>
</dbReference>
<dbReference type="SUPFAM" id="SSF53756">
    <property type="entry name" value="UDP-Glycosyltransferase/glycogen phosphorylase"/>
    <property type="match status" value="1"/>
</dbReference>
<accession>Q43654</accession>
<accession>Q9LEB9</accession>
<keyword id="KW-0035">Amyloplast</keyword>
<keyword id="KW-0150">Chloroplast</keyword>
<keyword id="KW-0328">Glycosyltransferase</keyword>
<keyword id="KW-0934">Plastid</keyword>
<keyword id="KW-1185">Reference proteome</keyword>
<keyword id="KW-0750">Starch biosynthesis</keyword>
<keyword id="KW-0808">Transferase</keyword>
<keyword id="KW-0809">Transit peptide</keyword>
<proteinExistence type="evidence at transcript level"/>
<feature type="transit peptide" description="Chloroplast" evidence="2">
    <location>
        <begin position="1"/>
        <end position="41"/>
    </location>
</feature>
<feature type="chain" id="PRO_0000011143" description="Starch synthase 1, chloroplastic/amyloplastic">
    <location>
        <begin position="42"/>
        <end position="647"/>
    </location>
</feature>
<feature type="region of interest" description="Disordered" evidence="3">
    <location>
        <begin position="66"/>
        <end position="95"/>
    </location>
</feature>
<feature type="compositionally biased region" description="Pro residues" evidence="3">
    <location>
        <begin position="66"/>
        <end position="91"/>
    </location>
</feature>
<feature type="binding site" evidence="1">
    <location>
        <position position="153"/>
    </location>
    <ligand>
        <name>ADP-alpha-D-glucose</name>
        <dbReference type="ChEBI" id="CHEBI:57498"/>
    </ligand>
</feature>
<comment type="catalytic activity">
    <reaction>
        <text>[(1-&gt;4)-alpha-D-glucosyl](n) + ADP-alpha-D-glucose = [(1-&gt;4)-alpha-D-glucosyl](n+1) + ADP + H(+)</text>
        <dbReference type="Rhea" id="RHEA:18189"/>
        <dbReference type="Rhea" id="RHEA-COMP:9584"/>
        <dbReference type="Rhea" id="RHEA-COMP:9587"/>
        <dbReference type="ChEBI" id="CHEBI:15378"/>
        <dbReference type="ChEBI" id="CHEBI:15444"/>
        <dbReference type="ChEBI" id="CHEBI:57498"/>
        <dbReference type="ChEBI" id="CHEBI:456216"/>
        <dbReference type="EC" id="2.4.1.21"/>
    </reaction>
</comment>
<comment type="pathway">
    <text>Glycan biosynthesis; starch biosynthesis.</text>
</comment>
<comment type="subcellular location">
    <subcellularLocation>
        <location evidence="1">Plastid</location>
        <location evidence="1">Chloroplast</location>
    </subcellularLocation>
    <subcellularLocation>
        <location evidence="1">Plastid</location>
        <location evidence="1">Amyloplast</location>
    </subcellularLocation>
    <text evidence="1">Amyloplast or chloroplast, soluble.</text>
</comment>
<comment type="similarity">
    <text evidence="4">Belongs to the glycosyltransferase 1 family. Bacterial/plant glycogen synthase subfamily.</text>
</comment>
<comment type="sequence caution" evidence="4">
    <conflict type="frameshift">
        <sequence resource="EMBL-CDS" id="AAB02197"/>
    </conflict>
</comment>
<reference key="1">
    <citation type="submission" date="2000-07" db="EMBL/GenBank/DDBJ databases">
        <title>Isolation, characterization and expression analysis of starch synthase I from wheat (Triticum aestivum L.).</title>
        <authorList>
            <person name="Peng M."/>
            <person name="Hucl P."/>
            <person name="Chibbar R.N."/>
        </authorList>
    </citation>
    <scope>NUCLEOTIDE SEQUENCE [MRNA]</scope>
    <source>
        <strain>cv. Fielder</strain>
        <tissue>Immature kernel</tissue>
    </source>
</reference>
<reference key="2">
    <citation type="submission" date="1996-02" db="EMBL/GenBank/DDBJ databases">
        <authorList>
            <person name="Block M."/>
            <person name="Loerz H."/>
            <person name="Luetticke S."/>
        </authorList>
    </citation>
    <scope>NUCLEOTIDE SEQUENCE [MRNA] OF 147-647</scope>
    <source>
        <strain>cv. Florida</strain>
        <tissue>Endosperm</tissue>
    </source>
</reference>
<evidence type="ECO:0000250" key="1"/>
<evidence type="ECO:0000255" key="2"/>
<evidence type="ECO:0000256" key="3">
    <source>
        <dbReference type="SAM" id="MobiDB-lite"/>
    </source>
</evidence>
<evidence type="ECO:0000305" key="4"/>